<feature type="signal peptide" evidence="1">
    <location>
        <begin position="1"/>
        <end position="23"/>
    </location>
</feature>
<feature type="chain" id="PRO_0000008722" description="Pollen allergen Phl p 1">
    <location>
        <begin position="24"/>
        <end position="263"/>
    </location>
</feature>
<feature type="domain" description="Expansin-like EG45" evidence="3">
    <location>
        <begin position="61"/>
        <end position="167"/>
    </location>
</feature>
<feature type="domain" description="Expansin-like CBD" evidence="2">
    <location>
        <begin position="181"/>
        <end position="262"/>
    </location>
</feature>
<feature type="glycosylation site" description="N-linked (GlcNAc...) asparagine" evidence="5">
    <location>
        <position position="32"/>
    </location>
</feature>
<feature type="disulfide bond">
    <location>
        <begin position="64"/>
        <end position="92"/>
    </location>
</feature>
<feature type="disulfide bond">
    <location>
        <begin position="95"/>
        <end position="162"/>
    </location>
</feature>
<feature type="disulfide bond">
    <location>
        <begin position="100"/>
        <end position="106"/>
    </location>
</feature>
<feature type="strand" evidence="8">
    <location>
        <begin position="42"/>
        <end position="49"/>
    </location>
</feature>
<feature type="turn" evidence="8">
    <location>
        <begin position="72"/>
        <end position="76"/>
    </location>
</feature>
<feature type="strand" evidence="8">
    <location>
        <begin position="78"/>
        <end position="81"/>
    </location>
</feature>
<feature type="helix" evidence="8">
    <location>
        <begin position="83"/>
        <end position="86"/>
    </location>
</feature>
<feature type="helix" evidence="8">
    <location>
        <begin position="87"/>
        <end position="89"/>
    </location>
</feature>
<feature type="strand" evidence="8">
    <location>
        <begin position="95"/>
        <end position="100"/>
    </location>
</feature>
<feature type="strand" evidence="8">
    <location>
        <begin position="111"/>
        <end position="118"/>
    </location>
</feature>
<feature type="strand" evidence="8">
    <location>
        <begin position="123"/>
        <end position="131"/>
    </location>
</feature>
<feature type="helix" evidence="8">
    <location>
        <begin position="132"/>
        <end position="136"/>
    </location>
</feature>
<feature type="helix" evidence="8">
    <location>
        <begin position="144"/>
        <end position="148"/>
    </location>
</feature>
<feature type="strand" evidence="8">
    <location>
        <begin position="152"/>
        <end position="159"/>
    </location>
</feature>
<feature type="strand" evidence="8">
    <location>
        <begin position="171"/>
        <end position="174"/>
    </location>
</feature>
<feature type="strand" evidence="8">
    <location>
        <begin position="182"/>
        <end position="188"/>
    </location>
</feature>
<feature type="strand" evidence="8">
    <location>
        <begin position="196"/>
        <end position="203"/>
    </location>
</feature>
<feature type="turn" evidence="8">
    <location>
        <begin position="216"/>
        <end position="218"/>
    </location>
</feature>
<feature type="strand" evidence="8">
    <location>
        <begin position="220"/>
        <end position="223"/>
    </location>
</feature>
<feature type="strand" evidence="8">
    <location>
        <begin position="232"/>
        <end position="241"/>
    </location>
</feature>
<feature type="strand" evidence="8">
    <location>
        <begin position="243"/>
        <end position="250"/>
    </location>
</feature>
<feature type="strand" evidence="8">
    <location>
        <begin position="256"/>
        <end position="261"/>
    </location>
</feature>
<evidence type="ECO:0000255" key="1"/>
<evidence type="ECO:0000255" key="2">
    <source>
        <dbReference type="PROSITE-ProRule" id="PRU00078"/>
    </source>
</evidence>
<evidence type="ECO:0000255" key="3">
    <source>
        <dbReference type="PROSITE-ProRule" id="PRU00079"/>
    </source>
</evidence>
<evidence type="ECO:0000269" key="4">
    <source>
    </source>
</evidence>
<evidence type="ECO:0000269" key="5">
    <source>
    </source>
</evidence>
<evidence type="ECO:0000305" key="6"/>
<evidence type="ECO:0000305" key="7">
    <source>
    </source>
</evidence>
<evidence type="ECO:0007829" key="8">
    <source>
        <dbReference type="PDB" id="1N10"/>
    </source>
</evidence>
<protein>
    <recommendedName>
        <fullName>Pollen allergen Phl p 1</fullName>
    </recommendedName>
    <alternativeName>
        <fullName>Allergen Phl p I</fullName>
    </alternativeName>
    <allergenName>Phl p 1</allergenName>
</protein>
<sequence>MASSSSVLLVVVLFAVFLGSAYGIPKVPPGPNITATYGDKWLDAKSTWYGKPTGAGPKDNGGACGYKDVDKPPFSGMTGCGNTPIFKSGRGCGSCFEIKCTKPEACSGEPVVVHITDDNEEPIAPYHFDLSGHAFGAMAKKGDEQKLRSAGELELQFRRVKCKYPEGTKVTFHVEKGSNPNYLALLVKYVNGDGDVVAVDIKEKGKDKWIELKESWGAIWRIDTPDKLTGPFTVRYTTEGGTKTEAEDVIPEGWKADTSYESK</sequence>
<name>MPAP1_PHLPR</name>
<reference key="1">
    <citation type="journal article" date="1994" name="J. Allergy Clin. Immunol.">
        <title>Complementary DNA cloning of the major allergen Phl p I from timothy grass (Phleum pratense); recombinant Phl p I inhibits IgE binding to group I allergens from eight different grass species.</title>
        <authorList>
            <person name="Laffer S."/>
            <person name="Valenta R."/>
            <person name="Vrtala S."/>
            <person name="Susani M."/>
            <person name="van Ree R."/>
            <person name="Kraft D."/>
            <person name="Scheiner O."/>
            <person name="Duchene M."/>
        </authorList>
    </citation>
    <scope>NUCLEOTIDE SEQUENCE [MRNA]</scope>
    <scope>ALLERGEN</scope>
    <source>
        <tissue>Pollen</tissue>
    </source>
</reference>
<reference key="2">
    <citation type="journal article" date="1997" name="Int. Arch. Allergy Immunol.">
        <title>X-ray crystal structures of birch pollen profilin and Phl p 2.</title>
        <authorList>
            <person name="Fedorov A.A."/>
            <person name="Ball T."/>
            <person name="Valenta R."/>
            <person name="Almo S.C."/>
        </authorList>
    </citation>
    <scope>X-RAY CRYSTALLOGRAPHY (2.9 ANGSTROMS) OF 24-263</scope>
    <scope>GLYCOSYLATION AT ASN-32</scope>
    <scope>SUBUNIT</scope>
</reference>
<proteinExistence type="evidence at protein level"/>
<comment type="subunit">
    <text evidence="7">Homodimer.</text>
</comment>
<comment type="subcellular location">
    <subcellularLocation>
        <location>Secreted</location>
    </subcellularLocation>
</comment>
<comment type="allergen">
    <text evidence="4">Causes an allergic reaction in human. Causes grass pollen allergy. Binds to IgE.</text>
</comment>
<comment type="similarity">
    <text evidence="6">Belongs to the expansin family. Expansin B subfamily.</text>
</comment>
<keyword id="KW-0002">3D-structure</keyword>
<keyword id="KW-0020">Allergen</keyword>
<keyword id="KW-1015">Disulfide bond</keyword>
<keyword id="KW-0325">Glycoprotein</keyword>
<keyword id="KW-0964">Secreted</keyword>
<keyword id="KW-0732">Signal</keyword>
<dbReference type="EMBL" id="X78813">
    <property type="protein sequence ID" value="CAA55390.1"/>
    <property type="molecule type" value="mRNA"/>
</dbReference>
<dbReference type="PIR" id="S44182">
    <property type="entry name" value="S44182"/>
</dbReference>
<dbReference type="PDB" id="1N10">
    <property type="method" value="X-ray"/>
    <property type="resolution" value="2.90 A"/>
    <property type="chains" value="A/B=23-263"/>
</dbReference>
<dbReference type="PDBsum" id="1N10"/>
<dbReference type="SMR" id="P43213"/>
<dbReference type="Allergome" id="549">
    <property type="allergen name" value="Phl p 1"/>
</dbReference>
<dbReference type="Allergome" id="551">
    <property type="allergen name" value="Phl p 1.0102"/>
</dbReference>
<dbReference type="GlyCosmos" id="P43213">
    <property type="glycosylation" value="1 site, No reported glycans"/>
</dbReference>
<dbReference type="iPTMnet" id="P43213"/>
<dbReference type="ABCD" id="P43213">
    <property type="antibodies" value="11 sequenced antibodies"/>
</dbReference>
<dbReference type="EvolutionaryTrace" id="P43213"/>
<dbReference type="GO" id="GO:0005576">
    <property type="term" value="C:extracellular region"/>
    <property type="evidence" value="ECO:0007669"/>
    <property type="project" value="UniProtKB-SubCell"/>
</dbReference>
<dbReference type="GO" id="GO:0009828">
    <property type="term" value="P:plant-type cell wall loosening"/>
    <property type="evidence" value="ECO:0000250"/>
    <property type="project" value="UniProtKB"/>
</dbReference>
<dbReference type="GO" id="GO:0019953">
    <property type="term" value="P:sexual reproduction"/>
    <property type="evidence" value="ECO:0007669"/>
    <property type="project" value="InterPro"/>
</dbReference>
<dbReference type="CDD" id="cd22275">
    <property type="entry name" value="DPBB_EXPB_N"/>
    <property type="match status" value="1"/>
</dbReference>
<dbReference type="Gene3D" id="2.60.40.760">
    <property type="entry name" value="Expansin, cellulose-binding-like domain"/>
    <property type="match status" value="1"/>
</dbReference>
<dbReference type="Gene3D" id="2.40.40.10">
    <property type="entry name" value="RlpA-like domain"/>
    <property type="match status" value="1"/>
</dbReference>
<dbReference type="InterPro" id="IPR007118">
    <property type="entry name" value="Expan_Lol_pI"/>
</dbReference>
<dbReference type="InterPro" id="IPR007112">
    <property type="entry name" value="Expansin/allergen_DPBB_dom"/>
</dbReference>
<dbReference type="InterPro" id="IPR007117">
    <property type="entry name" value="Expansin_CBD"/>
</dbReference>
<dbReference type="InterPro" id="IPR036749">
    <property type="entry name" value="Expansin_CBD_sf"/>
</dbReference>
<dbReference type="InterPro" id="IPR005795">
    <property type="entry name" value="LolPI"/>
</dbReference>
<dbReference type="InterPro" id="IPR009009">
    <property type="entry name" value="RlpA-like_DPBB"/>
</dbReference>
<dbReference type="InterPro" id="IPR036908">
    <property type="entry name" value="RlpA-like_sf"/>
</dbReference>
<dbReference type="PANTHER" id="PTHR31692:SF21">
    <property type="entry name" value="EXPANSIN-B1"/>
    <property type="match status" value="1"/>
</dbReference>
<dbReference type="PANTHER" id="PTHR31692">
    <property type="entry name" value="EXPANSIN-B3"/>
    <property type="match status" value="1"/>
</dbReference>
<dbReference type="Pfam" id="PF03330">
    <property type="entry name" value="DPBB_1"/>
    <property type="match status" value="1"/>
</dbReference>
<dbReference type="Pfam" id="PF01357">
    <property type="entry name" value="Expansin_C"/>
    <property type="match status" value="1"/>
</dbReference>
<dbReference type="PRINTS" id="PR01225">
    <property type="entry name" value="EXPANSNFAMLY"/>
</dbReference>
<dbReference type="PRINTS" id="PR00829">
    <property type="entry name" value="LOLP1ALLERGN"/>
</dbReference>
<dbReference type="SMART" id="SM00837">
    <property type="entry name" value="DPBB_1"/>
    <property type="match status" value="1"/>
</dbReference>
<dbReference type="SUPFAM" id="SSF50685">
    <property type="entry name" value="Barwin-like endoglucanases"/>
    <property type="match status" value="1"/>
</dbReference>
<dbReference type="SUPFAM" id="SSF49590">
    <property type="entry name" value="PHL pollen allergen"/>
    <property type="match status" value="1"/>
</dbReference>
<dbReference type="PROSITE" id="PS50843">
    <property type="entry name" value="EXPANSIN_CBD"/>
    <property type="match status" value="1"/>
</dbReference>
<dbReference type="PROSITE" id="PS50842">
    <property type="entry name" value="EXPANSIN_EG45"/>
    <property type="match status" value="1"/>
</dbReference>
<accession>P43213</accession>
<organism>
    <name type="scientific">Phleum pratense</name>
    <name type="common">Common timothy</name>
    <dbReference type="NCBI Taxonomy" id="15957"/>
    <lineage>
        <taxon>Eukaryota</taxon>
        <taxon>Viridiplantae</taxon>
        <taxon>Streptophyta</taxon>
        <taxon>Embryophyta</taxon>
        <taxon>Tracheophyta</taxon>
        <taxon>Spermatophyta</taxon>
        <taxon>Magnoliopsida</taxon>
        <taxon>Liliopsida</taxon>
        <taxon>Poales</taxon>
        <taxon>Poaceae</taxon>
        <taxon>BOP clade</taxon>
        <taxon>Pooideae</taxon>
        <taxon>Poodae</taxon>
        <taxon>Poeae</taxon>
        <taxon>Poeae Chloroplast Group 2 (Poeae type)</taxon>
        <taxon>Poodinae</taxon>
        <taxon>Phleinae</taxon>
        <taxon>Phleum</taxon>
    </lineage>
</organism>
<gene>
    <name type="primary">PHLPI</name>
</gene>